<accession>Q2JWZ1</accession>
<dbReference type="EC" id="2.7.7.18" evidence="1"/>
<dbReference type="EMBL" id="CP000239">
    <property type="protein sequence ID" value="ABC98709.1"/>
    <property type="molecule type" value="Genomic_DNA"/>
</dbReference>
<dbReference type="RefSeq" id="WP_011429398.1">
    <property type="nucleotide sequence ID" value="NC_007775.1"/>
</dbReference>
<dbReference type="SMR" id="Q2JWZ1"/>
<dbReference type="STRING" id="321327.CYA_0491"/>
<dbReference type="KEGG" id="cya:CYA_0491"/>
<dbReference type="eggNOG" id="COG1057">
    <property type="taxonomic scope" value="Bacteria"/>
</dbReference>
<dbReference type="HOGENOM" id="CLU_069765_3_1_3"/>
<dbReference type="OrthoDB" id="5295945at2"/>
<dbReference type="UniPathway" id="UPA00253">
    <property type="reaction ID" value="UER00332"/>
</dbReference>
<dbReference type="Proteomes" id="UP000008818">
    <property type="component" value="Chromosome"/>
</dbReference>
<dbReference type="GO" id="GO:0005524">
    <property type="term" value="F:ATP binding"/>
    <property type="evidence" value="ECO:0007669"/>
    <property type="project" value="UniProtKB-KW"/>
</dbReference>
<dbReference type="GO" id="GO:0004515">
    <property type="term" value="F:nicotinate-nucleotide adenylyltransferase activity"/>
    <property type="evidence" value="ECO:0007669"/>
    <property type="project" value="UniProtKB-UniRule"/>
</dbReference>
<dbReference type="GO" id="GO:0009435">
    <property type="term" value="P:NAD biosynthetic process"/>
    <property type="evidence" value="ECO:0007669"/>
    <property type="project" value="UniProtKB-UniRule"/>
</dbReference>
<dbReference type="CDD" id="cd02165">
    <property type="entry name" value="NMNAT"/>
    <property type="match status" value="1"/>
</dbReference>
<dbReference type="Gene3D" id="3.40.50.620">
    <property type="entry name" value="HUPs"/>
    <property type="match status" value="1"/>
</dbReference>
<dbReference type="HAMAP" id="MF_00244">
    <property type="entry name" value="NaMN_adenylyltr"/>
    <property type="match status" value="1"/>
</dbReference>
<dbReference type="InterPro" id="IPR004821">
    <property type="entry name" value="Cyt_trans-like"/>
</dbReference>
<dbReference type="InterPro" id="IPR005248">
    <property type="entry name" value="NadD/NMNAT"/>
</dbReference>
<dbReference type="InterPro" id="IPR014729">
    <property type="entry name" value="Rossmann-like_a/b/a_fold"/>
</dbReference>
<dbReference type="NCBIfam" id="TIGR00125">
    <property type="entry name" value="cyt_tran_rel"/>
    <property type="match status" value="1"/>
</dbReference>
<dbReference type="NCBIfam" id="TIGR00482">
    <property type="entry name" value="nicotinate (nicotinamide) nucleotide adenylyltransferase"/>
    <property type="match status" value="1"/>
</dbReference>
<dbReference type="NCBIfam" id="NF000840">
    <property type="entry name" value="PRK00071.1-3"/>
    <property type="match status" value="1"/>
</dbReference>
<dbReference type="PANTHER" id="PTHR39321">
    <property type="entry name" value="NICOTINATE-NUCLEOTIDE ADENYLYLTRANSFERASE-RELATED"/>
    <property type="match status" value="1"/>
</dbReference>
<dbReference type="PANTHER" id="PTHR39321:SF3">
    <property type="entry name" value="PHOSPHOPANTETHEINE ADENYLYLTRANSFERASE"/>
    <property type="match status" value="1"/>
</dbReference>
<dbReference type="Pfam" id="PF01467">
    <property type="entry name" value="CTP_transf_like"/>
    <property type="match status" value="1"/>
</dbReference>
<dbReference type="SUPFAM" id="SSF52374">
    <property type="entry name" value="Nucleotidylyl transferase"/>
    <property type="match status" value="1"/>
</dbReference>
<name>NADD_SYNJA</name>
<protein>
    <recommendedName>
        <fullName evidence="1">Probable nicotinate-nucleotide adenylyltransferase</fullName>
        <ecNumber evidence="1">2.7.7.18</ecNumber>
    </recommendedName>
    <alternativeName>
        <fullName evidence="1">Deamido-NAD(+) diphosphorylase</fullName>
    </alternativeName>
    <alternativeName>
        <fullName evidence="1">Deamido-NAD(+) pyrophosphorylase</fullName>
    </alternativeName>
    <alternativeName>
        <fullName evidence="1">Nicotinate mononucleotide adenylyltransferase</fullName>
        <shortName evidence="1">NaMN adenylyltransferase</shortName>
    </alternativeName>
</protein>
<proteinExistence type="inferred from homology"/>
<keyword id="KW-0067">ATP-binding</keyword>
<keyword id="KW-0520">NAD</keyword>
<keyword id="KW-0547">Nucleotide-binding</keyword>
<keyword id="KW-0548">Nucleotidyltransferase</keyword>
<keyword id="KW-0662">Pyridine nucleotide biosynthesis</keyword>
<keyword id="KW-0808">Transferase</keyword>
<reference key="1">
    <citation type="journal article" date="2007" name="ISME J.">
        <title>Population level functional diversity in a microbial community revealed by comparative genomic and metagenomic analyses.</title>
        <authorList>
            <person name="Bhaya D."/>
            <person name="Grossman A.R."/>
            <person name="Steunou A.-S."/>
            <person name="Khuri N."/>
            <person name="Cohan F.M."/>
            <person name="Hamamura N."/>
            <person name="Melendrez M.C."/>
            <person name="Bateson M.M."/>
            <person name="Ward D.M."/>
            <person name="Heidelberg J.F."/>
        </authorList>
    </citation>
    <scope>NUCLEOTIDE SEQUENCE [LARGE SCALE GENOMIC DNA]</scope>
    <source>
        <strain>JA-3-3Ab</strain>
    </source>
</reference>
<evidence type="ECO:0000255" key="1">
    <source>
        <dbReference type="HAMAP-Rule" id="MF_00244"/>
    </source>
</evidence>
<sequence>MSPPDPQQRRIGILGGTFNPVHHGHLIMAEQALWQFNLDQVLWMPAGDPPHKPLAAGASKADRLAMVKLAIADHERFACSDLEIRRPGPSYTIETLRSLMQEQPDTQWYWIIGVDALRDLPQWYQAEELARLCHWIVAPRIDAGDAAQVLRSVAAKLPIRAAILDAPTLTLSSTYLRQQIQKGGSIRYLVPPAVEHYIRQHRLYLDP</sequence>
<feature type="chain" id="PRO_0000336742" description="Probable nicotinate-nucleotide adenylyltransferase">
    <location>
        <begin position="1"/>
        <end position="207"/>
    </location>
</feature>
<comment type="function">
    <text evidence="1">Catalyzes the reversible adenylation of nicotinate mononucleotide (NaMN) to nicotinic acid adenine dinucleotide (NaAD).</text>
</comment>
<comment type="catalytic activity">
    <reaction evidence="1">
        <text>nicotinate beta-D-ribonucleotide + ATP + H(+) = deamido-NAD(+) + diphosphate</text>
        <dbReference type="Rhea" id="RHEA:22860"/>
        <dbReference type="ChEBI" id="CHEBI:15378"/>
        <dbReference type="ChEBI" id="CHEBI:30616"/>
        <dbReference type="ChEBI" id="CHEBI:33019"/>
        <dbReference type="ChEBI" id="CHEBI:57502"/>
        <dbReference type="ChEBI" id="CHEBI:58437"/>
        <dbReference type="EC" id="2.7.7.18"/>
    </reaction>
</comment>
<comment type="pathway">
    <text evidence="1">Cofactor biosynthesis; NAD(+) biosynthesis; deamido-NAD(+) from nicotinate D-ribonucleotide: step 1/1.</text>
</comment>
<comment type="similarity">
    <text evidence="1">Belongs to the NadD family.</text>
</comment>
<organism>
    <name type="scientific">Synechococcus sp. (strain JA-3-3Ab)</name>
    <name type="common">Cyanobacteria bacterium Yellowstone A-Prime</name>
    <dbReference type="NCBI Taxonomy" id="321327"/>
    <lineage>
        <taxon>Bacteria</taxon>
        <taxon>Bacillati</taxon>
        <taxon>Cyanobacteriota</taxon>
        <taxon>Cyanophyceae</taxon>
        <taxon>Synechococcales</taxon>
        <taxon>Synechococcaceae</taxon>
        <taxon>Synechococcus</taxon>
    </lineage>
</organism>
<gene>
    <name evidence="1" type="primary">nadD</name>
    <name type="ordered locus">CYA_0491</name>
</gene>